<organism evidence="3">
    <name type="scientific">Enterobacteria phage N4</name>
    <name type="common">Bacteriophage N4</name>
    <dbReference type="NCBI Taxonomy" id="2886925"/>
    <lineage>
        <taxon>Viruses</taxon>
        <taxon>Duplodnaviria</taxon>
        <taxon>Heunggongvirae</taxon>
        <taxon>Uroviricota</taxon>
        <taxon>Caudoviricetes</taxon>
        <taxon>Schitoviridae</taxon>
        <taxon>Enquatrovirinae</taxon>
        <taxon>Enquatrovirus</taxon>
        <taxon>Enquatrovirus N4</taxon>
    </lineage>
</organism>
<sequence length="71" mass="8139">MEQLNYGYKIKRNQVRGSWLFLVYGKPIYELHRGEKSKTYYVTHIATGKTPACAGLLRDAIMKACMLEGLL</sequence>
<proteinExistence type="predicted"/>
<organismHost>
    <name type="scientific">Escherichia coli</name>
    <dbReference type="NCBI Taxonomy" id="562"/>
</organismHost>
<accession>A0MZA0</accession>
<evidence type="ECO:0000269" key="1">
    <source>
    </source>
</evidence>
<evidence type="ECO:0000305" key="2"/>
<evidence type="ECO:0000312" key="3">
    <source>
        <dbReference type="Proteomes" id="UP000001789"/>
    </source>
</evidence>
<dbReference type="EMBL" id="EF056009">
    <property type="protein sequence ID" value="ABK54379.1"/>
    <property type="molecule type" value="Genomic_DNA"/>
</dbReference>
<dbReference type="RefSeq" id="YP_950486.1">
    <property type="nucleotide sequence ID" value="NC_008720.1"/>
</dbReference>
<dbReference type="GeneID" id="5075662"/>
<dbReference type="KEGG" id="vg:5075662"/>
<dbReference type="Proteomes" id="UP000001789">
    <property type="component" value="Genome"/>
</dbReference>
<dbReference type="GO" id="GO:0044071">
    <property type="term" value="P:symbiont-mediated perturbation of host cell cycle progression"/>
    <property type="evidence" value="ECO:0007669"/>
    <property type="project" value="UniProtKB-KW"/>
</dbReference>
<dbReference type="GO" id="GO:0098673">
    <property type="term" value="P:symbiont-mediated suppression of host DNA replication"/>
    <property type="evidence" value="ECO:0007669"/>
    <property type="project" value="UniProtKB-KW"/>
</dbReference>
<protein>
    <recommendedName>
        <fullName evidence="2">Gene product 8</fullName>
        <shortName>gp8</shortName>
    </recommendedName>
</protein>
<feature type="chain" id="PRO_0000433214" description="Gene product 8">
    <location>
        <begin position="1"/>
        <end position="71"/>
    </location>
</feature>
<reference key="1">
    <citation type="submission" date="2006-11" db="EMBL/GenBank/DDBJ databases">
        <title>Genome sequence and analysis of bacteriophage N4.</title>
        <authorList>
            <person name="Hendrix R.W."/>
            <person name="Rothman-Denes L."/>
            <person name="Hatfull G.F."/>
            <person name="Lawrence J.G."/>
            <person name="Pedulla M."/>
        </authorList>
    </citation>
    <scope>NUCLEOTIDE SEQUENCE [LARGE SCALE GENOMIC DNA]</scope>
</reference>
<reference key="2">
    <citation type="journal article" date="2011" name="Mol. Microbiol.">
        <title>A phage-encoded inhibitor of Escherichia coli DNA replication targets the DNA polymerase clamp loader.</title>
        <authorList>
            <person name="Yano S.T."/>
            <person name="Rothman-Denes L.B."/>
        </authorList>
    </citation>
    <scope>FUNCTION</scope>
</reference>
<name>GP8_BPN4</name>
<comment type="function">
    <text evidence="1">Targets the host DNA sliding clamp and inhibits host DNA replication.</text>
</comment>
<keyword id="KW-0945">Host-virus interaction</keyword>
<keyword id="KW-1248">Inhibition of host DNA replication by virus</keyword>
<keyword id="KW-1121">Modulation of host cell cycle by virus</keyword>
<keyword id="KW-1185">Reference proteome</keyword>